<gene>
    <name evidence="1" type="primary">pheT</name>
    <name type="ordered locus">MHP7448_0274</name>
</gene>
<sequence length="718" mass="83418">MLFSLRRLKKLANLEAFSDQKVIDSLINLGFEVDQITKLNEISGIKFGQILEIRKNPEADNLWICKVQFADKIREIQTTAKNVIENKQVLAFIPGSKSGNTTFLAKKLRGHISEGMLISAAELGFNKHLLNSELDQGVLVFDPIFDLESNPLKVLELDDLILDIKLLWNRPDGNSYLVLANELAAFFKTDFSLINKEITGKFYSELKIINKTDSKIFALEIQKLPKLALVDIFLLLKSEVKIDNLAQNFANFILIYTGQPCYCLQLEKNQQKVELIEQKVKIKYEPDAISSYHFLDQEKKPLLIPEFSDQIIMENNSFFLIMPKFNLLKVKQIKQFLKKNSLKLTQLGKNYNYGTTFIALSFLNFFLEDQKIDFSWPINFDKSLISKKTFLDLNYNELKEILGLELSQEDISKTNLILEKIGYNFDNTSFSPPFYRVDIEFFADYAADFLRFYGLEKLKDCKLEQVKAKIPNPDFEPVKLKTLGYYETNSFLLISKKEDFNPLELKSQDLLTFPSQEHTKIRYSLAWQLAKITKYNQKRKITEINLYEKGSIAGWNHSLALASTIYTSEDLKKHLKILYNYDFDFLPADSEFLNPEKSQFIYLDNVLVGWLGQVVEKYNYENVTFLEILLSKVEKIPKKEGGKIKFRPYDNSQLKYRDITLSLPMKDIPDPYLKVIQKIPEIFSVKLINYVIINNQQKITYRITGPDQVCAEIDKFYK</sequence>
<evidence type="ECO:0000255" key="1">
    <source>
        <dbReference type="HAMAP-Rule" id="MF_00283"/>
    </source>
</evidence>
<evidence type="ECO:0000305" key="2"/>
<comment type="catalytic activity">
    <reaction evidence="1">
        <text>tRNA(Phe) + L-phenylalanine + ATP = L-phenylalanyl-tRNA(Phe) + AMP + diphosphate + H(+)</text>
        <dbReference type="Rhea" id="RHEA:19413"/>
        <dbReference type="Rhea" id="RHEA-COMP:9668"/>
        <dbReference type="Rhea" id="RHEA-COMP:9699"/>
        <dbReference type="ChEBI" id="CHEBI:15378"/>
        <dbReference type="ChEBI" id="CHEBI:30616"/>
        <dbReference type="ChEBI" id="CHEBI:33019"/>
        <dbReference type="ChEBI" id="CHEBI:58095"/>
        <dbReference type="ChEBI" id="CHEBI:78442"/>
        <dbReference type="ChEBI" id="CHEBI:78531"/>
        <dbReference type="ChEBI" id="CHEBI:456215"/>
        <dbReference type="EC" id="6.1.1.20"/>
    </reaction>
</comment>
<comment type="cofactor">
    <cofactor evidence="1">
        <name>Mg(2+)</name>
        <dbReference type="ChEBI" id="CHEBI:18420"/>
    </cofactor>
    <text evidence="1">Binds 2 magnesium ions per tetramer.</text>
</comment>
<comment type="subunit">
    <text evidence="1">Tetramer of two alpha and two beta subunits.</text>
</comment>
<comment type="subcellular location">
    <subcellularLocation>
        <location evidence="1">Cytoplasm</location>
    </subcellularLocation>
</comment>
<comment type="similarity">
    <text evidence="1">Belongs to the phenylalanyl-tRNA synthetase beta subunit family. Type 1 subfamily.</text>
</comment>
<comment type="caution">
    <text evidence="2">Lacks the conserved glutamate residue in position 447 that binds magnesium; it is replaced by an alanine residue.</text>
</comment>
<organism>
    <name type="scientific">Mesomycoplasma hyopneumoniae (strain 7448)</name>
    <name type="common">Mycoplasma hyopneumoniae</name>
    <dbReference type="NCBI Taxonomy" id="262722"/>
    <lineage>
        <taxon>Bacteria</taxon>
        <taxon>Bacillati</taxon>
        <taxon>Mycoplasmatota</taxon>
        <taxon>Mycoplasmoidales</taxon>
        <taxon>Metamycoplasmataceae</taxon>
        <taxon>Mesomycoplasma</taxon>
    </lineage>
</organism>
<name>SYFB_MESH7</name>
<keyword id="KW-0030">Aminoacyl-tRNA synthetase</keyword>
<keyword id="KW-0067">ATP-binding</keyword>
<keyword id="KW-0963">Cytoplasm</keyword>
<keyword id="KW-0436">Ligase</keyword>
<keyword id="KW-0460">Magnesium</keyword>
<keyword id="KW-0479">Metal-binding</keyword>
<keyword id="KW-0547">Nucleotide-binding</keyword>
<keyword id="KW-0648">Protein biosynthesis</keyword>
<keyword id="KW-0694">RNA-binding</keyword>
<keyword id="KW-0820">tRNA-binding</keyword>
<feature type="chain" id="PRO_0000232808" description="Phenylalanine--tRNA ligase beta subunit">
    <location>
        <begin position="1"/>
        <end position="718"/>
    </location>
</feature>
<feature type="domain" description="tRNA-binding" evidence="1">
    <location>
        <begin position="39"/>
        <end position="153"/>
    </location>
</feature>
<feature type="domain" description="B5" evidence="1">
    <location>
        <begin position="386"/>
        <end position="460"/>
    </location>
</feature>
<feature type="binding site" evidence="1">
    <location>
        <position position="438"/>
    </location>
    <ligand>
        <name>Mg(2+)</name>
        <dbReference type="ChEBI" id="CHEBI:18420"/>
        <note>shared with alpha subunit</note>
    </ligand>
</feature>
<feature type="binding site" evidence="1">
    <location>
        <position position="444"/>
    </location>
    <ligand>
        <name>Mg(2+)</name>
        <dbReference type="ChEBI" id="CHEBI:18420"/>
        <note>shared with alpha subunit</note>
    </ligand>
</feature>
<feature type="binding site" evidence="1">
    <location>
        <position position="448"/>
    </location>
    <ligand>
        <name>Mg(2+)</name>
        <dbReference type="ChEBI" id="CHEBI:18420"/>
        <note>shared with alpha subunit</note>
    </ligand>
</feature>
<protein>
    <recommendedName>
        <fullName evidence="1">Phenylalanine--tRNA ligase beta subunit</fullName>
        <ecNumber evidence="1">6.1.1.20</ecNumber>
    </recommendedName>
    <alternativeName>
        <fullName evidence="1">Phenylalanyl-tRNA synthetase beta subunit</fullName>
        <shortName evidence="1">PheRS</shortName>
    </alternativeName>
</protein>
<proteinExistence type="inferred from homology"/>
<reference key="1">
    <citation type="journal article" date="2005" name="J. Bacteriol.">
        <title>Swine and poultry pathogens: the complete genome sequences of two strains of Mycoplasma hyopneumoniae and a strain of Mycoplasma synoviae.</title>
        <authorList>
            <person name="Vasconcelos A.T.R."/>
            <person name="Ferreira H.B."/>
            <person name="Bizarro C.V."/>
            <person name="Bonatto S.L."/>
            <person name="Carvalho M.O."/>
            <person name="Pinto P.M."/>
            <person name="Almeida D.F."/>
            <person name="Almeida L.G.P."/>
            <person name="Almeida R."/>
            <person name="Alves-Junior L."/>
            <person name="Assuncao E.N."/>
            <person name="Azevedo V.A.C."/>
            <person name="Bogo M.R."/>
            <person name="Brigido M.M."/>
            <person name="Brocchi M."/>
            <person name="Burity H.A."/>
            <person name="Camargo A.A."/>
            <person name="Camargo S.S."/>
            <person name="Carepo M.S."/>
            <person name="Carraro D.M."/>
            <person name="de Mattos Cascardo J.C."/>
            <person name="Castro L.A."/>
            <person name="Cavalcanti G."/>
            <person name="Chemale G."/>
            <person name="Collevatti R.G."/>
            <person name="Cunha C.W."/>
            <person name="Dallagiovanna B."/>
            <person name="Dambros B.P."/>
            <person name="Dellagostin O.A."/>
            <person name="Falcao C."/>
            <person name="Fantinatti-Garboggini F."/>
            <person name="Felipe M.S.S."/>
            <person name="Fiorentin L."/>
            <person name="Franco G.R."/>
            <person name="Freitas N.S.A."/>
            <person name="Frias D."/>
            <person name="Grangeiro T.B."/>
            <person name="Grisard E.C."/>
            <person name="Guimaraes C.T."/>
            <person name="Hungria M."/>
            <person name="Jardim S.N."/>
            <person name="Krieger M.A."/>
            <person name="Laurino J.P."/>
            <person name="Lima L.F.A."/>
            <person name="Lopes M.I."/>
            <person name="Loreto E.L.S."/>
            <person name="Madeira H.M.F."/>
            <person name="Manfio G.P."/>
            <person name="Maranhao A.Q."/>
            <person name="Martinkovics C.T."/>
            <person name="Medeiros S.R.B."/>
            <person name="Moreira M.A.M."/>
            <person name="Neiva M."/>
            <person name="Ramalho-Neto C.E."/>
            <person name="Nicolas M.F."/>
            <person name="Oliveira S.C."/>
            <person name="Paixao R.F.C."/>
            <person name="Pedrosa F.O."/>
            <person name="Pena S.D.J."/>
            <person name="Pereira M."/>
            <person name="Pereira-Ferrari L."/>
            <person name="Piffer I."/>
            <person name="Pinto L.S."/>
            <person name="Potrich D.P."/>
            <person name="Salim A.C.M."/>
            <person name="Santos F.R."/>
            <person name="Schmitt R."/>
            <person name="Schneider M.P.C."/>
            <person name="Schrank A."/>
            <person name="Schrank I.S."/>
            <person name="Schuck A.F."/>
            <person name="Seuanez H.N."/>
            <person name="Silva D.W."/>
            <person name="Silva R."/>
            <person name="Silva S.C."/>
            <person name="Soares C.M.A."/>
            <person name="Souza K.R.L."/>
            <person name="Souza R.C."/>
            <person name="Staats C.C."/>
            <person name="Steffens M.B.R."/>
            <person name="Teixeira S.M.R."/>
            <person name="Urmenyi T.P."/>
            <person name="Vainstein M.H."/>
            <person name="Zuccherato L.W."/>
            <person name="Simpson A.J.G."/>
            <person name="Zaha A."/>
        </authorList>
    </citation>
    <scope>NUCLEOTIDE SEQUENCE [LARGE SCALE GENOMIC DNA]</scope>
    <source>
        <strain>7448</strain>
    </source>
</reference>
<dbReference type="EC" id="6.1.1.20" evidence="1"/>
<dbReference type="EMBL" id="AE017244">
    <property type="protein sequence ID" value="AAZ53648.1"/>
    <property type="molecule type" value="Genomic_DNA"/>
</dbReference>
<dbReference type="RefSeq" id="WP_011290126.1">
    <property type="nucleotide sequence ID" value="NC_007332.1"/>
</dbReference>
<dbReference type="SMR" id="Q4A891"/>
<dbReference type="KEGG" id="mhp:MHP7448_0274"/>
<dbReference type="HOGENOM" id="CLU_016891_2_0_14"/>
<dbReference type="Proteomes" id="UP000000553">
    <property type="component" value="Chromosome"/>
</dbReference>
<dbReference type="GO" id="GO:0005737">
    <property type="term" value="C:cytoplasm"/>
    <property type="evidence" value="ECO:0007669"/>
    <property type="project" value="UniProtKB-SubCell"/>
</dbReference>
<dbReference type="GO" id="GO:0005524">
    <property type="term" value="F:ATP binding"/>
    <property type="evidence" value="ECO:0007669"/>
    <property type="project" value="UniProtKB-UniRule"/>
</dbReference>
<dbReference type="GO" id="GO:0000287">
    <property type="term" value="F:magnesium ion binding"/>
    <property type="evidence" value="ECO:0007669"/>
    <property type="project" value="UniProtKB-UniRule"/>
</dbReference>
<dbReference type="GO" id="GO:0004826">
    <property type="term" value="F:phenylalanine-tRNA ligase activity"/>
    <property type="evidence" value="ECO:0007669"/>
    <property type="project" value="UniProtKB-UniRule"/>
</dbReference>
<dbReference type="GO" id="GO:0000049">
    <property type="term" value="F:tRNA binding"/>
    <property type="evidence" value="ECO:0007669"/>
    <property type="project" value="UniProtKB-KW"/>
</dbReference>
<dbReference type="GO" id="GO:0006432">
    <property type="term" value="P:phenylalanyl-tRNA aminoacylation"/>
    <property type="evidence" value="ECO:0007669"/>
    <property type="project" value="UniProtKB-UniRule"/>
</dbReference>
<dbReference type="CDD" id="cd02796">
    <property type="entry name" value="tRNA_bind_bactPheRS"/>
    <property type="match status" value="1"/>
</dbReference>
<dbReference type="Gene3D" id="3.30.56.10">
    <property type="match status" value="2"/>
</dbReference>
<dbReference type="Gene3D" id="3.30.930.10">
    <property type="entry name" value="Bira Bifunctional Protein, Domain 2"/>
    <property type="match status" value="1"/>
</dbReference>
<dbReference type="Gene3D" id="2.40.50.140">
    <property type="entry name" value="Nucleic acid-binding proteins"/>
    <property type="match status" value="1"/>
</dbReference>
<dbReference type="HAMAP" id="MF_00283">
    <property type="entry name" value="Phe_tRNA_synth_beta1"/>
    <property type="match status" value="1"/>
</dbReference>
<dbReference type="InterPro" id="IPR045864">
    <property type="entry name" value="aa-tRNA-synth_II/BPL/LPL"/>
</dbReference>
<dbReference type="InterPro" id="IPR009061">
    <property type="entry name" value="DNA-bd_dom_put_sf"/>
</dbReference>
<dbReference type="InterPro" id="IPR012340">
    <property type="entry name" value="NA-bd_OB-fold"/>
</dbReference>
<dbReference type="InterPro" id="IPR004532">
    <property type="entry name" value="Phe-tRNA-ligase_IIc_bsu_bact"/>
</dbReference>
<dbReference type="InterPro" id="IPR041616">
    <property type="entry name" value="PheRS_beta_core"/>
</dbReference>
<dbReference type="InterPro" id="IPR002547">
    <property type="entry name" value="tRNA-bd_dom"/>
</dbReference>
<dbReference type="InterPro" id="IPR033714">
    <property type="entry name" value="tRNA_bind_bactPheRS"/>
</dbReference>
<dbReference type="InterPro" id="IPR005147">
    <property type="entry name" value="tRNA_synthase_B5-dom"/>
</dbReference>
<dbReference type="NCBIfam" id="NF001879">
    <property type="entry name" value="PRK00629.5-1"/>
    <property type="match status" value="1"/>
</dbReference>
<dbReference type="NCBIfam" id="NF001882">
    <property type="entry name" value="PRK00629.5-4"/>
    <property type="match status" value="1"/>
</dbReference>
<dbReference type="Pfam" id="PF03484">
    <property type="entry name" value="B5"/>
    <property type="match status" value="1"/>
</dbReference>
<dbReference type="Pfam" id="PF01588">
    <property type="entry name" value="tRNA_bind"/>
    <property type="match status" value="1"/>
</dbReference>
<dbReference type="Pfam" id="PF17759">
    <property type="entry name" value="tRNA_synthFbeta"/>
    <property type="match status" value="1"/>
</dbReference>
<dbReference type="SMART" id="SM00874">
    <property type="entry name" value="B5"/>
    <property type="match status" value="1"/>
</dbReference>
<dbReference type="SUPFAM" id="SSF55681">
    <property type="entry name" value="Class II aaRS and biotin synthetases"/>
    <property type="match status" value="1"/>
</dbReference>
<dbReference type="SUPFAM" id="SSF50249">
    <property type="entry name" value="Nucleic acid-binding proteins"/>
    <property type="match status" value="1"/>
</dbReference>
<dbReference type="SUPFAM" id="SSF46955">
    <property type="entry name" value="Putative DNA-binding domain"/>
    <property type="match status" value="1"/>
</dbReference>
<dbReference type="PROSITE" id="PS51483">
    <property type="entry name" value="B5"/>
    <property type="match status" value="1"/>
</dbReference>
<dbReference type="PROSITE" id="PS50886">
    <property type="entry name" value="TRBD"/>
    <property type="match status" value="1"/>
</dbReference>
<accession>Q4A891</accession>